<comment type="function">
    <text evidence="1">Catalyzes the formation of acetyl phosphate from acetate and ATP. Can also catalyze the reverse reaction.</text>
</comment>
<comment type="catalytic activity">
    <reaction evidence="1">
        <text>acetate + ATP = acetyl phosphate + ADP</text>
        <dbReference type="Rhea" id="RHEA:11352"/>
        <dbReference type="ChEBI" id="CHEBI:22191"/>
        <dbReference type="ChEBI" id="CHEBI:30089"/>
        <dbReference type="ChEBI" id="CHEBI:30616"/>
        <dbReference type="ChEBI" id="CHEBI:456216"/>
        <dbReference type="EC" id="2.7.2.1"/>
    </reaction>
</comment>
<comment type="cofactor">
    <cofactor evidence="1">
        <name>Mg(2+)</name>
        <dbReference type="ChEBI" id="CHEBI:18420"/>
    </cofactor>
    <cofactor evidence="1">
        <name>Mn(2+)</name>
        <dbReference type="ChEBI" id="CHEBI:29035"/>
    </cofactor>
    <text evidence="1">Mg(2+). Can also accept Mn(2+).</text>
</comment>
<comment type="pathway">
    <text evidence="1">Metabolic intermediate biosynthesis; acetyl-CoA biosynthesis; acetyl-CoA from acetate: step 1/2.</text>
</comment>
<comment type="subunit">
    <text evidence="1">Homodimer.</text>
</comment>
<comment type="subcellular location">
    <subcellularLocation>
        <location evidence="1">Cytoplasm</location>
    </subcellularLocation>
</comment>
<comment type="similarity">
    <text evidence="1">Belongs to the acetokinase family.</text>
</comment>
<feature type="chain" id="PRO_1000002215" description="Acetate kinase">
    <location>
        <begin position="1"/>
        <end position="399"/>
    </location>
</feature>
<feature type="active site" description="Proton donor/acceptor" evidence="1">
    <location>
        <position position="146"/>
    </location>
</feature>
<feature type="binding site" evidence="1">
    <location>
        <position position="7"/>
    </location>
    <ligand>
        <name>Mg(2+)</name>
        <dbReference type="ChEBI" id="CHEBI:18420"/>
    </ligand>
</feature>
<feature type="binding site" evidence="1">
    <location>
        <position position="14"/>
    </location>
    <ligand>
        <name>ATP</name>
        <dbReference type="ChEBI" id="CHEBI:30616"/>
    </ligand>
</feature>
<feature type="binding site" evidence="1">
    <location>
        <position position="89"/>
    </location>
    <ligand>
        <name>substrate</name>
    </ligand>
</feature>
<feature type="binding site" evidence="1">
    <location>
        <begin position="206"/>
        <end position="210"/>
    </location>
    <ligand>
        <name>ATP</name>
        <dbReference type="ChEBI" id="CHEBI:30616"/>
    </ligand>
</feature>
<feature type="binding site" evidence="1">
    <location>
        <begin position="280"/>
        <end position="282"/>
    </location>
    <ligand>
        <name>ATP</name>
        <dbReference type="ChEBI" id="CHEBI:30616"/>
    </ligand>
</feature>
<feature type="binding site" evidence="1">
    <location>
        <begin position="328"/>
        <end position="332"/>
    </location>
    <ligand>
        <name>ATP</name>
        <dbReference type="ChEBI" id="CHEBI:30616"/>
    </ligand>
</feature>
<feature type="binding site" evidence="1">
    <location>
        <position position="382"/>
    </location>
    <ligand>
        <name>Mg(2+)</name>
        <dbReference type="ChEBI" id="CHEBI:18420"/>
    </ligand>
</feature>
<feature type="site" description="Transition state stabilizer" evidence="1">
    <location>
        <position position="178"/>
    </location>
</feature>
<feature type="site" description="Transition state stabilizer" evidence="1">
    <location>
        <position position="239"/>
    </location>
</feature>
<name>ACKA_CAMFF</name>
<proteinExistence type="inferred from homology"/>
<keyword id="KW-0067">ATP-binding</keyword>
<keyword id="KW-0963">Cytoplasm</keyword>
<keyword id="KW-0418">Kinase</keyword>
<keyword id="KW-0460">Magnesium</keyword>
<keyword id="KW-0479">Metal-binding</keyword>
<keyword id="KW-0547">Nucleotide-binding</keyword>
<keyword id="KW-0808">Transferase</keyword>
<accession>A0RP54</accession>
<gene>
    <name evidence="1" type="primary">ackA</name>
    <name type="ordered locus">CFF8240_0812</name>
</gene>
<dbReference type="EC" id="2.7.2.1" evidence="1"/>
<dbReference type="EMBL" id="CP000487">
    <property type="protein sequence ID" value="ABK82092.1"/>
    <property type="molecule type" value="Genomic_DNA"/>
</dbReference>
<dbReference type="RefSeq" id="WP_002849266.1">
    <property type="nucleotide sequence ID" value="NC_008599.1"/>
</dbReference>
<dbReference type="SMR" id="A0RP54"/>
<dbReference type="KEGG" id="cff:CFF8240_0812"/>
<dbReference type="eggNOG" id="COG0282">
    <property type="taxonomic scope" value="Bacteria"/>
</dbReference>
<dbReference type="HOGENOM" id="CLU_020352_0_1_7"/>
<dbReference type="UniPathway" id="UPA00340">
    <property type="reaction ID" value="UER00458"/>
</dbReference>
<dbReference type="Proteomes" id="UP000000760">
    <property type="component" value="Chromosome"/>
</dbReference>
<dbReference type="GO" id="GO:0005737">
    <property type="term" value="C:cytoplasm"/>
    <property type="evidence" value="ECO:0007669"/>
    <property type="project" value="UniProtKB-SubCell"/>
</dbReference>
<dbReference type="GO" id="GO:0008776">
    <property type="term" value="F:acetate kinase activity"/>
    <property type="evidence" value="ECO:0007669"/>
    <property type="project" value="UniProtKB-UniRule"/>
</dbReference>
<dbReference type="GO" id="GO:0005524">
    <property type="term" value="F:ATP binding"/>
    <property type="evidence" value="ECO:0007669"/>
    <property type="project" value="UniProtKB-KW"/>
</dbReference>
<dbReference type="GO" id="GO:0000287">
    <property type="term" value="F:magnesium ion binding"/>
    <property type="evidence" value="ECO:0007669"/>
    <property type="project" value="UniProtKB-UniRule"/>
</dbReference>
<dbReference type="GO" id="GO:0006083">
    <property type="term" value="P:acetate metabolic process"/>
    <property type="evidence" value="ECO:0007669"/>
    <property type="project" value="TreeGrafter"/>
</dbReference>
<dbReference type="GO" id="GO:0006085">
    <property type="term" value="P:acetyl-CoA biosynthetic process"/>
    <property type="evidence" value="ECO:0007669"/>
    <property type="project" value="UniProtKB-UniRule"/>
</dbReference>
<dbReference type="CDD" id="cd24010">
    <property type="entry name" value="ASKHA_NBD_AcK_PK"/>
    <property type="match status" value="1"/>
</dbReference>
<dbReference type="Gene3D" id="3.30.420.40">
    <property type="match status" value="2"/>
</dbReference>
<dbReference type="HAMAP" id="MF_00020">
    <property type="entry name" value="Acetate_kinase"/>
    <property type="match status" value="1"/>
</dbReference>
<dbReference type="InterPro" id="IPR004372">
    <property type="entry name" value="Ac/propionate_kinase"/>
</dbReference>
<dbReference type="InterPro" id="IPR000890">
    <property type="entry name" value="Aliphatic_acid_kin_short-chain"/>
</dbReference>
<dbReference type="InterPro" id="IPR023865">
    <property type="entry name" value="Aliphatic_acid_kinase_CS"/>
</dbReference>
<dbReference type="InterPro" id="IPR043129">
    <property type="entry name" value="ATPase_NBD"/>
</dbReference>
<dbReference type="NCBIfam" id="TIGR00016">
    <property type="entry name" value="ackA"/>
    <property type="match status" value="1"/>
</dbReference>
<dbReference type="PANTHER" id="PTHR21060">
    <property type="entry name" value="ACETATE KINASE"/>
    <property type="match status" value="1"/>
</dbReference>
<dbReference type="PANTHER" id="PTHR21060:SF15">
    <property type="entry name" value="ACETATE KINASE-RELATED"/>
    <property type="match status" value="1"/>
</dbReference>
<dbReference type="Pfam" id="PF00871">
    <property type="entry name" value="Acetate_kinase"/>
    <property type="match status" value="1"/>
</dbReference>
<dbReference type="PIRSF" id="PIRSF000722">
    <property type="entry name" value="Acetate_prop_kin"/>
    <property type="match status" value="1"/>
</dbReference>
<dbReference type="PRINTS" id="PR00471">
    <property type="entry name" value="ACETATEKNASE"/>
</dbReference>
<dbReference type="SUPFAM" id="SSF53067">
    <property type="entry name" value="Actin-like ATPase domain"/>
    <property type="match status" value="2"/>
</dbReference>
<dbReference type="PROSITE" id="PS01075">
    <property type="entry name" value="ACETATE_KINASE_1"/>
    <property type="match status" value="1"/>
</dbReference>
<sequence>MKILVINSGSSSIKFKLYDMSDESVICKGLIEQIGAKNSYAKIVTKTGEIAEKREEIPDHGTGIDVMNELLFNSHALTSLDEIDGVGHRVVQGADLFNDAVLVDDDVLQKIEELIPLAPLHNPAHLAGMKETLKVRPDIPNVAVFDTVFHQTMPKSSYMYPLPIEFYEKYKIRRYGAHGTSHQFVAKAGAKILGVDFDHFSCITLHLGNGASIAAIKNGKCIDTSMGLTPLEGLMMGTRCGSIDPAIVPFLMKNANLSGEEIDTIMNKKSGLLAIGGSNDMREIEARMDAGDENAKLAFEMFVLRIKKYIGAYISILGEINAIIFTAGIGENDARIREAVCSGLEIFGIRMDKDKNAAKKDEPRRVGLPETKVRIIIVPTDEELAIAEDTLRIINQSKK</sequence>
<evidence type="ECO:0000255" key="1">
    <source>
        <dbReference type="HAMAP-Rule" id="MF_00020"/>
    </source>
</evidence>
<reference key="1">
    <citation type="submission" date="2006-11" db="EMBL/GenBank/DDBJ databases">
        <title>Sequence of Campylobacter fetus subsp. fetus 82-40.</title>
        <authorList>
            <person name="Fouts D.E."/>
            <person name="Nelson K.E."/>
        </authorList>
    </citation>
    <scope>NUCLEOTIDE SEQUENCE [LARGE SCALE GENOMIC DNA]</scope>
    <source>
        <strain>82-40</strain>
    </source>
</reference>
<protein>
    <recommendedName>
        <fullName evidence="1">Acetate kinase</fullName>
        <ecNumber evidence="1">2.7.2.1</ecNumber>
    </recommendedName>
    <alternativeName>
        <fullName evidence="1">Acetokinase</fullName>
    </alternativeName>
</protein>
<organism>
    <name type="scientific">Campylobacter fetus subsp. fetus (strain 82-40)</name>
    <dbReference type="NCBI Taxonomy" id="360106"/>
    <lineage>
        <taxon>Bacteria</taxon>
        <taxon>Pseudomonadati</taxon>
        <taxon>Campylobacterota</taxon>
        <taxon>Epsilonproteobacteria</taxon>
        <taxon>Campylobacterales</taxon>
        <taxon>Campylobacteraceae</taxon>
        <taxon>Campylobacter</taxon>
    </lineage>
</organism>